<evidence type="ECO:0000250" key="1"/>
<evidence type="ECO:0000250" key="2">
    <source>
        <dbReference type="UniProtKB" id="P03887"/>
    </source>
</evidence>
<evidence type="ECO:0000250" key="3">
    <source>
        <dbReference type="UniProtKB" id="P18929"/>
    </source>
</evidence>
<evidence type="ECO:0000255" key="4"/>
<evidence type="ECO:0000312" key="5">
    <source>
        <dbReference type="EMBL" id="ABY51635.1"/>
    </source>
</evidence>
<gene>
    <name evidence="3" type="primary">mt:ND1</name>
    <name evidence="5" type="synonym">ND1</name>
</gene>
<protein>
    <recommendedName>
        <fullName evidence="2">NADH-ubiquinone oxidoreductase chain 1</fullName>
        <ecNumber>7.1.1.2</ecNumber>
    </recommendedName>
    <alternativeName>
        <fullName evidence="2">NADH dehydrogenase subunit 1</fullName>
    </alternativeName>
</protein>
<keyword id="KW-0249">Electron transport</keyword>
<keyword id="KW-0472">Membrane</keyword>
<keyword id="KW-0496">Mitochondrion</keyword>
<keyword id="KW-0999">Mitochondrion inner membrane</keyword>
<keyword id="KW-0520">NAD</keyword>
<keyword id="KW-1185">Reference proteome</keyword>
<keyword id="KW-0679">Respiratory chain</keyword>
<keyword id="KW-1278">Translocase</keyword>
<keyword id="KW-0812">Transmembrane</keyword>
<keyword id="KW-1133">Transmembrane helix</keyword>
<keyword id="KW-0813">Transport</keyword>
<keyword id="KW-0830">Ubiquinone</keyword>
<dbReference type="EC" id="7.1.1.2"/>
<dbReference type="EMBL" id="EU352212">
    <property type="protein sequence ID" value="ABY51635.1"/>
    <property type="molecule type" value="Genomic_DNA"/>
</dbReference>
<dbReference type="RefSeq" id="YP_001649174.1">
    <property type="nucleotide sequence ID" value="NC_010241.1"/>
</dbReference>
<dbReference type="SMR" id="B0FWD8"/>
<dbReference type="FunCoup" id="B0FWD8">
    <property type="interactions" value="133"/>
</dbReference>
<dbReference type="STRING" id="7159.B0FWD8"/>
<dbReference type="PaxDb" id="7159-AAEL018687-PA"/>
<dbReference type="EnsemblMetazoa" id="AAEL018687-RA">
    <property type="protein sequence ID" value="AAEL018687-PA"/>
    <property type="gene ID" value="AAEL018687"/>
</dbReference>
<dbReference type="VEuPathDB" id="VectorBase:AAEL018687"/>
<dbReference type="eggNOG" id="KOG4770">
    <property type="taxonomic scope" value="Eukaryota"/>
</dbReference>
<dbReference type="HOGENOM" id="CLU_015134_0_1_1"/>
<dbReference type="InParanoid" id="B0FWD8"/>
<dbReference type="OrthoDB" id="531329at2759"/>
<dbReference type="Proteomes" id="UP000008820">
    <property type="component" value="Mitochondrion MT"/>
</dbReference>
<dbReference type="Proteomes" id="UP000682892">
    <property type="component" value="Mitochondrion MT"/>
</dbReference>
<dbReference type="GO" id="GO:0005743">
    <property type="term" value="C:mitochondrial inner membrane"/>
    <property type="evidence" value="ECO:0007669"/>
    <property type="project" value="UniProtKB-SubCell"/>
</dbReference>
<dbReference type="GO" id="GO:0008137">
    <property type="term" value="F:NADH dehydrogenase (ubiquinone) activity"/>
    <property type="evidence" value="ECO:0007669"/>
    <property type="project" value="UniProtKB-EC"/>
</dbReference>
<dbReference type="GO" id="GO:0009060">
    <property type="term" value="P:aerobic respiration"/>
    <property type="evidence" value="ECO:0007669"/>
    <property type="project" value="TreeGrafter"/>
</dbReference>
<dbReference type="HAMAP" id="MF_01350">
    <property type="entry name" value="NDH1_NuoH"/>
    <property type="match status" value="1"/>
</dbReference>
<dbReference type="InterPro" id="IPR001694">
    <property type="entry name" value="NADH_UbQ_OxRdtase_su1/FPO"/>
</dbReference>
<dbReference type="InterPro" id="IPR018086">
    <property type="entry name" value="NADH_UbQ_OxRdtase_su1_CS"/>
</dbReference>
<dbReference type="PANTHER" id="PTHR11432">
    <property type="entry name" value="NADH DEHYDROGENASE SUBUNIT 1"/>
    <property type="match status" value="1"/>
</dbReference>
<dbReference type="PANTHER" id="PTHR11432:SF3">
    <property type="entry name" value="NADH-UBIQUINONE OXIDOREDUCTASE CHAIN 1"/>
    <property type="match status" value="1"/>
</dbReference>
<dbReference type="Pfam" id="PF00146">
    <property type="entry name" value="NADHdh"/>
    <property type="match status" value="1"/>
</dbReference>
<dbReference type="PROSITE" id="PS00667">
    <property type="entry name" value="COMPLEX1_ND1_1"/>
    <property type="match status" value="1"/>
</dbReference>
<dbReference type="PROSITE" id="PS00668">
    <property type="entry name" value="COMPLEX1_ND1_2"/>
    <property type="match status" value="1"/>
</dbReference>
<name>NU1M_AEDAE</name>
<sequence>MDYLLSLIGSLLLVICVMVGVAFLTLLERKVLGYIQIRKGPNKVGFMGLLQPFSDAVKLFTKEQTYPLLSNYIFYYFSPIFSLFLSLLIWMSMPYLIKLYSFNLGVLFFLCITSLGVYTVMVAGWSSNSNYALLGGLRAVAQTISYEVSLALILLSFIFLIGNYNFLNFFMYQKYMWFIVFCFPLGLVWFASCLAETNRTPFDFAEGESELVSGFNVEYSSGGFALIFLAEYSSILFMSMLFSVIFLGSDIYSILFFFKLTIISFFFIWVRGTLPRFRYDKLMYLAWKSFLPMSLNYLFFFIGVKIFILSMLF</sequence>
<reference evidence="5" key="1">
    <citation type="submission" date="2007-12" db="EMBL/GenBank/DDBJ databases">
        <title>The mitochondrial genome of the Yellow fever mosquito - Aedes aegypti.</title>
        <authorList>
            <person name="Lobo N.F."/>
            <person name="Lovin D."/>
            <person name="DeBruyn B."/>
            <person name="Puiu D."/>
            <person name="Shumway M."/>
            <person name="Haas B."/>
            <person name="Nene V."/>
            <person name="Severson D.W."/>
        </authorList>
    </citation>
    <scope>NUCLEOTIDE SEQUENCE [LARGE SCALE GENOMIC DNA]</scope>
    <source>
        <strain evidence="5">LVPib12</strain>
    </source>
</reference>
<comment type="function">
    <text evidence="2">Core subunit of the mitochondrial membrane respiratory chain NADH dehydrogenase (Complex I) that is believed to belong to the minimal assembly required for catalysis. Complex I functions in the transfer of electrons from NADH to the respiratory chain. The immediate electron acceptor for the enzyme is believed to be ubiquinone (By similarity).</text>
</comment>
<comment type="catalytic activity">
    <reaction>
        <text>a ubiquinone + NADH + 5 H(+)(in) = a ubiquinol + NAD(+) + 4 H(+)(out)</text>
        <dbReference type="Rhea" id="RHEA:29091"/>
        <dbReference type="Rhea" id="RHEA-COMP:9565"/>
        <dbReference type="Rhea" id="RHEA-COMP:9566"/>
        <dbReference type="ChEBI" id="CHEBI:15378"/>
        <dbReference type="ChEBI" id="CHEBI:16389"/>
        <dbReference type="ChEBI" id="CHEBI:17976"/>
        <dbReference type="ChEBI" id="CHEBI:57540"/>
        <dbReference type="ChEBI" id="CHEBI:57945"/>
        <dbReference type="EC" id="7.1.1.2"/>
    </reaction>
</comment>
<comment type="subcellular location">
    <subcellularLocation>
        <location evidence="1">Mitochondrion inner membrane</location>
        <topology evidence="1">Multi-pass membrane protein</topology>
    </subcellularLocation>
</comment>
<comment type="similarity">
    <text evidence="4">Belongs to the complex I subunit 1 family.</text>
</comment>
<organism>
    <name type="scientific">Aedes aegypti</name>
    <name type="common">Yellowfever mosquito</name>
    <name type="synonym">Culex aegypti</name>
    <dbReference type="NCBI Taxonomy" id="7159"/>
    <lineage>
        <taxon>Eukaryota</taxon>
        <taxon>Metazoa</taxon>
        <taxon>Ecdysozoa</taxon>
        <taxon>Arthropoda</taxon>
        <taxon>Hexapoda</taxon>
        <taxon>Insecta</taxon>
        <taxon>Pterygota</taxon>
        <taxon>Neoptera</taxon>
        <taxon>Endopterygota</taxon>
        <taxon>Diptera</taxon>
        <taxon>Nematocera</taxon>
        <taxon>Culicoidea</taxon>
        <taxon>Culicidae</taxon>
        <taxon>Culicinae</taxon>
        <taxon>Aedini</taxon>
        <taxon>Aedes</taxon>
        <taxon>Stegomyia</taxon>
    </lineage>
</organism>
<accession>B0FWD8</accession>
<feature type="chain" id="PRO_0000347267" description="NADH-ubiquinone oxidoreductase chain 1">
    <location>
        <begin position="1"/>
        <end position="313"/>
    </location>
</feature>
<feature type="transmembrane region" description="Helical" evidence="4">
    <location>
        <begin position="7"/>
        <end position="27"/>
    </location>
</feature>
<feature type="transmembrane region" description="Helical" evidence="4">
    <location>
        <begin position="73"/>
        <end position="93"/>
    </location>
</feature>
<feature type="transmembrane region" description="Helical" evidence="4">
    <location>
        <begin position="104"/>
        <end position="124"/>
    </location>
</feature>
<feature type="transmembrane region" description="Helical" evidence="4">
    <location>
        <begin position="150"/>
        <end position="170"/>
    </location>
</feature>
<feature type="transmembrane region" description="Helical" evidence="4">
    <location>
        <begin position="175"/>
        <end position="195"/>
    </location>
</feature>
<feature type="transmembrane region" description="Helical" evidence="4">
    <location>
        <begin position="226"/>
        <end position="246"/>
    </location>
</feature>
<feature type="transmembrane region" description="Helical" evidence="4">
    <location>
        <begin position="250"/>
        <end position="270"/>
    </location>
</feature>
<feature type="transmembrane region" description="Helical" evidence="4">
    <location>
        <begin position="293"/>
        <end position="313"/>
    </location>
</feature>
<geneLocation type="mitochondrion" evidence="5"/>
<proteinExistence type="inferred from homology"/>